<sequence>MTMHLNDLKPADGARTERTRVGRGIGSGLGKTCGRGHKGSFARKGGGKIKAGFEGGQTPMQRRLPKIGFRSKMARDSAEVLSYQLDKLEAGEIDFAALRAANLVPSRAKKAKIVLKGELSKKFVLKGVAATAGAKAAIEAAGGSVEE</sequence>
<protein>
    <recommendedName>
        <fullName evidence="1">Large ribosomal subunit protein uL15</fullName>
    </recommendedName>
    <alternativeName>
        <fullName evidence="3">50S ribosomal protein L15</fullName>
    </alternativeName>
</protein>
<proteinExistence type="inferred from homology"/>
<reference key="1">
    <citation type="journal article" date="2005" name="Genome Res.">
        <title>Comparative and functional genomic analyses of the pathogenicity of phytopathogen Xanthomonas campestris pv. campestris.</title>
        <authorList>
            <person name="Qian W."/>
            <person name="Jia Y."/>
            <person name="Ren S.-X."/>
            <person name="He Y.-Q."/>
            <person name="Feng J.-X."/>
            <person name="Lu L.-F."/>
            <person name="Sun Q."/>
            <person name="Ying G."/>
            <person name="Tang D.-J."/>
            <person name="Tang H."/>
            <person name="Wu W."/>
            <person name="Hao P."/>
            <person name="Wang L."/>
            <person name="Jiang B.-L."/>
            <person name="Zeng S."/>
            <person name="Gu W.-Y."/>
            <person name="Lu G."/>
            <person name="Rong L."/>
            <person name="Tian Y."/>
            <person name="Yao Z."/>
            <person name="Fu G."/>
            <person name="Chen B."/>
            <person name="Fang R."/>
            <person name="Qiang B."/>
            <person name="Chen Z."/>
            <person name="Zhao G.-P."/>
            <person name="Tang J.-L."/>
            <person name="He C."/>
        </authorList>
    </citation>
    <scope>NUCLEOTIDE SEQUENCE [LARGE SCALE GENOMIC DNA]</scope>
    <source>
        <strain>8004</strain>
    </source>
</reference>
<organism>
    <name type="scientific">Xanthomonas campestris pv. campestris (strain 8004)</name>
    <dbReference type="NCBI Taxonomy" id="314565"/>
    <lineage>
        <taxon>Bacteria</taxon>
        <taxon>Pseudomonadati</taxon>
        <taxon>Pseudomonadota</taxon>
        <taxon>Gammaproteobacteria</taxon>
        <taxon>Lysobacterales</taxon>
        <taxon>Lysobacteraceae</taxon>
        <taxon>Xanthomonas</taxon>
    </lineage>
</organism>
<name>RL15_XANC8</name>
<keyword id="KW-0687">Ribonucleoprotein</keyword>
<keyword id="KW-0689">Ribosomal protein</keyword>
<keyword id="KW-0694">RNA-binding</keyword>
<keyword id="KW-0699">rRNA-binding</keyword>
<feature type="chain" id="PRO_0000104854" description="Large ribosomal subunit protein uL15">
    <location>
        <begin position="1"/>
        <end position="147"/>
    </location>
</feature>
<feature type="region of interest" description="Disordered" evidence="2">
    <location>
        <begin position="1"/>
        <end position="64"/>
    </location>
</feature>
<feature type="compositionally biased region" description="Basic and acidic residues" evidence="2">
    <location>
        <begin position="1"/>
        <end position="20"/>
    </location>
</feature>
<feature type="compositionally biased region" description="Gly residues" evidence="2">
    <location>
        <begin position="23"/>
        <end position="33"/>
    </location>
</feature>
<feature type="compositionally biased region" description="Basic residues" evidence="2">
    <location>
        <begin position="34"/>
        <end position="47"/>
    </location>
</feature>
<evidence type="ECO:0000255" key="1">
    <source>
        <dbReference type="HAMAP-Rule" id="MF_01341"/>
    </source>
</evidence>
<evidence type="ECO:0000256" key="2">
    <source>
        <dbReference type="SAM" id="MobiDB-lite"/>
    </source>
</evidence>
<evidence type="ECO:0000305" key="3"/>
<gene>
    <name evidence="1" type="primary">rplO</name>
    <name type="ordered locus">XC_3321</name>
</gene>
<comment type="function">
    <text evidence="1">Binds to the 23S rRNA.</text>
</comment>
<comment type="subunit">
    <text evidence="1">Part of the 50S ribosomal subunit.</text>
</comment>
<comment type="similarity">
    <text evidence="1">Belongs to the universal ribosomal protein uL15 family.</text>
</comment>
<accession>Q4URF8</accession>
<dbReference type="EMBL" id="CP000050">
    <property type="protein sequence ID" value="AAY50365.1"/>
    <property type="molecule type" value="Genomic_DNA"/>
</dbReference>
<dbReference type="RefSeq" id="WP_012439114.1">
    <property type="nucleotide sequence ID" value="NZ_CP155948.1"/>
</dbReference>
<dbReference type="SMR" id="Q4URF8"/>
<dbReference type="GeneID" id="95583333"/>
<dbReference type="KEGG" id="xcb:XC_3321"/>
<dbReference type="HOGENOM" id="CLU_055188_4_2_6"/>
<dbReference type="Proteomes" id="UP000000420">
    <property type="component" value="Chromosome"/>
</dbReference>
<dbReference type="GO" id="GO:0022625">
    <property type="term" value="C:cytosolic large ribosomal subunit"/>
    <property type="evidence" value="ECO:0007669"/>
    <property type="project" value="TreeGrafter"/>
</dbReference>
<dbReference type="GO" id="GO:0019843">
    <property type="term" value="F:rRNA binding"/>
    <property type="evidence" value="ECO:0007669"/>
    <property type="project" value="UniProtKB-UniRule"/>
</dbReference>
<dbReference type="GO" id="GO:0003735">
    <property type="term" value="F:structural constituent of ribosome"/>
    <property type="evidence" value="ECO:0007669"/>
    <property type="project" value="InterPro"/>
</dbReference>
<dbReference type="GO" id="GO:0006412">
    <property type="term" value="P:translation"/>
    <property type="evidence" value="ECO:0007669"/>
    <property type="project" value="UniProtKB-UniRule"/>
</dbReference>
<dbReference type="FunFam" id="3.100.10.10:FF:000008">
    <property type="entry name" value="50S ribosomal protein L15"/>
    <property type="match status" value="1"/>
</dbReference>
<dbReference type="Gene3D" id="3.100.10.10">
    <property type="match status" value="1"/>
</dbReference>
<dbReference type="HAMAP" id="MF_01341">
    <property type="entry name" value="Ribosomal_uL15"/>
    <property type="match status" value="1"/>
</dbReference>
<dbReference type="InterPro" id="IPR030878">
    <property type="entry name" value="Ribosomal_uL15"/>
</dbReference>
<dbReference type="InterPro" id="IPR021131">
    <property type="entry name" value="Ribosomal_uL15/eL18"/>
</dbReference>
<dbReference type="InterPro" id="IPR036227">
    <property type="entry name" value="Ribosomal_uL15/eL18_sf"/>
</dbReference>
<dbReference type="InterPro" id="IPR005749">
    <property type="entry name" value="Ribosomal_uL15_bac-type"/>
</dbReference>
<dbReference type="InterPro" id="IPR001196">
    <property type="entry name" value="Ribosomal_uL15_CS"/>
</dbReference>
<dbReference type="NCBIfam" id="TIGR01071">
    <property type="entry name" value="rplO_bact"/>
    <property type="match status" value="1"/>
</dbReference>
<dbReference type="PANTHER" id="PTHR12934">
    <property type="entry name" value="50S RIBOSOMAL PROTEIN L15"/>
    <property type="match status" value="1"/>
</dbReference>
<dbReference type="PANTHER" id="PTHR12934:SF11">
    <property type="entry name" value="LARGE RIBOSOMAL SUBUNIT PROTEIN UL15M"/>
    <property type="match status" value="1"/>
</dbReference>
<dbReference type="Pfam" id="PF00828">
    <property type="entry name" value="Ribosomal_L27A"/>
    <property type="match status" value="1"/>
</dbReference>
<dbReference type="SUPFAM" id="SSF52080">
    <property type="entry name" value="Ribosomal proteins L15p and L18e"/>
    <property type="match status" value="1"/>
</dbReference>
<dbReference type="PROSITE" id="PS00475">
    <property type="entry name" value="RIBOSOMAL_L15"/>
    <property type="match status" value="1"/>
</dbReference>